<proteinExistence type="inferred from homology"/>
<organism>
    <name type="scientific">Eremothecium gossypii (strain ATCC 10895 / CBS 109.51 / FGSC 9923 / NRRL Y-1056)</name>
    <name type="common">Yeast</name>
    <name type="synonym">Ashbya gossypii</name>
    <dbReference type="NCBI Taxonomy" id="284811"/>
    <lineage>
        <taxon>Eukaryota</taxon>
        <taxon>Fungi</taxon>
        <taxon>Dikarya</taxon>
        <taxon>Ascomycota</taxon>
        <taxon>Saccharomycotina</taxon>
        <taxon>Saccharomycetes</taxon>
        <taxon>Saccharomycetales</taxon>
        <taxon>Saccharomycetaceae</taxon>
        <taxon>Eremothecium</taxon>
    </lineage>
</organism>
<gene>
    <name type="primary">RAD59</name>
    <name type="ordered locus">AER046W</name>
</gene>
<feature type="chain" id="PRO_0000173894" description="DNA repair protein RAD59">
    <location>
        <begin position="1"/>
        <end position="204"/>
    </location>
</feature>
<accession>Q757G7</accession>
<dbReference type="EMBL" id="AE016818">
    <property type="protein sequence ID" value="AAS52730.1"/>
    <property type="molecule type" value="Genomic_DNA"/>
</dbReference>
<dbReference type="RefSeq" id="NP_984906.1">
    <property type="nucleotide sequence ID" value="NM_210260.1"/>
</dbReference>
<dbReference type="SMR" id="Q757G7"/>
<dbReference type="FunCoup" id="Q757G7">
    <property type="interactions" value="135"/>
</dbReference>
<dbReference type="STRING" id="284811.Q757G7"/>
<dbReference type="EnsemblFungi" id="AAS52730">
    <property type="protein sequence ID" value="AAS52730"/>
    <property type="gene ID" value="AGOS_AER046W"/>
</dbReference>
<dbReference type="GeneID" id="4621108"/>
<dbReference type="KEGG" id="ago:AGOS_AER046W"/>
<dbReference type="eggNOG" id="KOG4141">
    <property type="taxonomic scope" value="Eukaryota"/>
</dbReference>
<dbReference type="HOGENOM" id="CLU_091426_0_0_1"/>
<dbReference type="InParanoid" id="Q757G7"/>
<dbReference type="OMA" id="WSVQRIG"/>
<dbReference type="OrthoDB" id="206565at2759"/>
<dbReference type="Proteomes" id="UP000000591">
    <property type="component" value="Chromosome V"/>
</dbReference>
<dbReference type="GO" id="GO:0005759">
    <property type="term" value="C:mitochondrial matrix"/>
    <property type="evidence" value="ECO:0007669"/>
    <property type="project" value="EnsemblFungi"/>
</dbReference>
<dbReference type="GO" id="GO:0005634">
    <property type="term" value="C:nucleus"/>
    <property type="evidence" value="ECO:0000318"/>
    <property type="project" value="GO_Central"/>
</dbReference>
<dbReference type="GO" id="GO:0006277">
    <property type="term" value="P:DNA amplification"/>
    <property type="evidence" value="ECO:0007669"/>
    <property type="project" value="EnsemblFungi"/>
</dbReference>
<dbReference type="GO" id="GO:0000724">
    <property type="term" value="P:double-strand break repair via homologous recombination"/>
    <property type="evidence" value="ECO:0000318"/>
    <property type="project" value="GO_Central"/>
</dbReference>
<dbReference type="GO" id="GO:0045002">
    <property type="term" value="P:double-strand break repair via single-strand annealing"/>
    <property type="evidence" value="ECO:0000318"/>
    <property type="project" value="GO_Central"/>
</dbReference>
<dbReference type="GO" id="GO:0043504">
    <property type="term" value="P:mitochondrial DNA repair"/>
    <property type="evidence" value="ECO:0007669"/>
    <property type="project" value="EnsemblFungi"/>
</dbReference>
<dbReference type="GO" id="GO:0006312">
    <property type="term" value="P:mitotic recombination"/>
    <property type="evidence" value="ECO:0000318"/>
    <property type="project" value="GO_Central"/>
</dbReference>
<dbReference type="GO" id="GO:2000278">
    <property type="term" value="P:regulation of DNA biosynthetic process"/>
    <property type="evidence" value="ECO:0007669"/>
    <property type="project" value="EnsemblFungi"/>
</dbReference>
<dbReference type="GO" id="GO:0000722">
    <property type="term" value="P:telomere maintenance via recombination"/>
    <property type="evidence" value="ECO:0007669"/>
    <property type="project" value="EnsemblFungi"/>
</dbReference>
<dbReference type="Gene3D" id="3.30.390.80">
    <property type="entry name" value="DNA repair protein Rad52/59/22"/>
    <property type="match status" value="1"/>
</dbReference>
<dbReference type="InterPro" id="IPR041247">
    <property type="entry name" value="Rad52_fam"/>
</dbReference>
<dbReference type="InterPro" id="IPR007232">
    <property type="entry name" value="Rad52_Rad59_Rad22"/>
</dbReference>
<dbReference type="InterPro" id="IPR042525">
    <property type="entry name" value="Rad52_Rad59_Rad22_sf"/>
</dbReference>
<dbReference type="InterPro" id="IPR016810">
    <property type="entry name" value="Rad59"/>
</dbReference>
<dbReference type="PANTHER" id="PTHR12132">
    <property type="entry name" value="DNA REPAIR AND RECOMBINATION PROTEIN RAD52, RAD59"/>
    <property type="match status" value="1"/>
</dbReference>
<dbReference type="PANTHER" id="PTHR12132:SF2">
    <property type="entry name" value="DNA REPAIR PROTEIN RAD59"/>
    <property type="match status" value="1"/>
</dbReference>
<dbReference type="Pfam" id="PF04098">
    <property type="entry name" value="Rad52_Rad22"/>
    <property type="match status" value="1"/>
</dbReference>
<dbReference type="PIRSF" id="PIRSF022936">
    <property type="entry name" value="RAD59_fungi"/>
    <property type="match status" value="1"/>
</dbReference>
<dbReference type="SUPFAM" id="SSF54768">
    <property type="entry name" value="dsRNA-binding domain-like"/>
    <property type="match status" value="1"/>
</dbReference>
<name>RAD59_EREGS</name>
<reference key="1">
    <citation type="journal article" date="2004" name="Science">
        <title>The Ashbya gossypii genome as a tool for mapping the ancient Saccharomyces cerevisiae genome.</title>
        <authorList>
            <person name="Dietrich F.S."/>
            <person name="Voegeli S."/>
            <person name="Brachat S."/>
            <person name="Lerch A."/>
            <person name="Gates K."/>
            <person name="Steiner S."/>
            <person name="Mohr C."/>
            <person name="Poehlmann R."/>
            <person name="Luedi P."/>
            <person name="Choi S."/>
            <person name="Wing R.A."/>
            <person name="Flavier A."/>
            <person name="Gaffney T.D."/>
            <person name="Philippsen P."/>
        </authorList>
    </citation>
    <scope>NUCLEOTIDE SEQUENCE [LARGE SCALE GENOMIC DNA]</scope>
    <source>
        <strain>ATCC 10895 / CBS 109.51 / FGSC 9923 / NRRL Y-1056</strain>
    </source>
</reference>
<reference key="2">
    <citation type="journal article" date="2013" name="G3 (Bethesda)">
        <title>Genomes of Ashbya fungi isolated from insects reveal four mating-type loci, numerous translocations, lack of transposons, and distinct gene duplications.</title>
        <authorList>
            <person name="Dietrich F.S."/>
            <person name="Voegeli S."/>
            <person name="Kuo S."/>
            <person name="Philippsen P."/>
        </authorList>
    </citation>
    <scope>GENOME REANNOTATION</scope>
    <source>
        <strain>ATCC 10895 / CBS 109.51 / FGSC 9923 / NRRL Y-1056</strain>
    </source>
</reference>
<comment type="function">
    <text evidence="1">Involved in the repair of double-strand breaks in DNA during vegetative growth via recombination and single-strand annealing. Anneals complementary single-stranded DNA (By similarity).</text>
</comment>
<comment type="subunit">
    <text evidence="1">Interacts with RAD51 and RAD52.</text>
</comment>
<comment type="subcellular location">
    <subcellularLocation>
        <location evidence="1">Nucleus</location>
    </subcellularLocation>
</comment>
<comment type="similarity">
    <text evidence="2">Belongs to the RAD52 family.</text>
</comment>
<evidence type="ECO:0000250" key="1"/>
<evidence type="ECO:0000305" key="2"/>
<sequence>MSDYTNVSWDNVTYYGGNGVALDELELKVSWHNRPASSWSVRRIGALQHKIEQYTFKIYHVNRYGKHSLSQVIPTHVLIQFANEAFGYNGWSSAVEEVLITDVKQRERVRDGAAIELYTVTAEARVKLTLQDGTNTEATGLSKITLPSKGDAYGKAKKEASADALKRCLLSFEGIVIEHEQKVASNYYTDGEFGSRKAGDKRDR</sequence>
<protein>
    <recommendedName>
        <fullName>DNA repair protein RAD59</fullName>
    </recommendedName>
</protein>
<keyword id="KW-0227">DNA damage</keyword>
<keyword id="KW-0233">DNA recombination</keyword>
<keyword id="KW-0234">DNA repair</keyword>
<keyword id="KW-0539">Nucleus</keyword>
<keyword id="KW-1185">Reference proteome</keyword>